<gene>
    <name evidence="1" type="primary">gpsA</name>
    <name type="ordered locus">BC_1505</name>
</gene>
<evidence type="ECO:0000255" key="1">
    <source>
        <dbReference type="HAMAP-Rule" id="MF_00394"/>
    </source>
</evidence>
<name>GPDA_BACCR</name>
<proteinExistence type="inferred from homology"/>
<comment type="function">
    <text evidence="1">Catalyzes the reduction of the glycolytic intermediate dihydroxyacetone phosphate (DHAP) to sn-glycerol 3-phosphate (G3P), the key precursor for phospholipid synthesis.</text>
</comment>
<comment type="catalytic activity">
    <reaction evidence="1">
        <text>sn-glycerol 3-phosphate + NAD(+) = dihydroxyacetone phosphate + NADH + H(+)</text>
        <dbReference type="Rhea" id="RHEA:11092"/>
        <dbReference type="ChEBI" id="CHEBI:15378"/>
        <dbReference type="ChEBI" id="CHEBI:57540"/>
        <dbReference type="ChEBI" id="CHEBI:57597"/>
        <dbReference type="ChEBI" id="CHEBI:57642"/>
        <dbReference type="ChEBI" id="CHEBI:57945"/>
        <dbReference type="EC" id="1.1.1.94"/>
    </reaction>
    <physiologicalReaction direction="right-to-left" evidence="1">
        <dbReference type="Rhea" id="RHEA:11094"/>
    </physiologicalReaction>
</comment>
<comment type="catalytic activity">
    <reaction evidence="1">
        <text>sn-glycerol 3-phosphate + NADP(+) = dihydroxyacetone phosphate + NADPH + H(+)</text>
        <dbReference type="Rhea" id="RHEA:11096"/>
        <dbReference type="ChEBI" id="CHEBI:15378"/>
        <dbReference type="ChEBI" id="CHEBI:57597"/>
        <dbReference type="ChEBI" id="CHEBI:57642"/>
        <dbReference type="ChEBI" id="CHEBI:57783"/>
        <dbReference type="ChEBI" id="CHEBI:58349"/>
        <dbReference type="EC" id="1.1.1.94"/>
    </reaction>
    <physiologicalReaction direction="right-to-left" evidence="1">
        <dbReference type="Rhea" id="RHEA:11098"/>
    </physiologicalReaction>
</comment>
<comment type="pathway">
    <text evidence="1">Membrane lipid metabolism; glycerophospholipid metabolism.</text>
</comment>
<comment type="subcellular location">
    <subcellularLocation>
        <location evidence="1">Cytoplasm</location>
    </subcellularLocation>
</comment>
<comment type="similarity">
    <text evidence="1">Belongs to the NAD-dependent glycerol-3-phosphate dehydrogenase family.</text>
</comment>
<reference key="1">
    <citation type="journal article" date="2003" name="Nature">
        <title>Genome sequence of Bacillus cereus and comparative analysis with Bacillus anthracis.</title>
        <authorList>
            <person name="Ivanova N."/>
            <person name="Sorokin A."/>
            <person name="Anderson I."/>
            <person name="Galleron N."/>
            <person name="Candelon B."/>
            <person name="Kapatral V."/>
            <person name="Bhattacharyya A."/>
            <person name="Reznik G."/>
            <person name="Mikhailova N."/>
            <person name="Lapidus A."/>
            <person name="Chu L."/>
            <person name="Mazur M."/>
            <person name="Goltsman E."/>
            <person name="Larsen N."/>
            <person name="D'Souza M."/>
            <person name="Walunas T."/>
            <person name="Grechkin Y."/>
            <person name="Pusch G."/>
            <person name="Haselkorn R."/>
            <person name="Fonstein M."/>
            <person name="Ehrlich S.D."/>
            <person name="Overbeek R."/>
            <person name="Kyrpides N.C."/>
        </authorList>
    </citation>
    <scope>NUCLEOTIDE SEQUENCE [LARGE SCALE GENOMIC DNA]</scope>
    <source>
        <strain>ATCC 14579 / DSM 31 / CCUG 7414 / JCM 2152 / NBRC 15305 / NCIMB 9373 / NCTC 2599 / NRRL B-3711</strain>
    </source>
</reference>
<feature type="chain" id="PRO_0000137921" description="Glycerol-3-phosphate dehydrogenase [NAD(P)+]">
    <location>
        <begin position="1"/>
        <end position="340"/>
    </location>
</feature>
<feature type="active site" description="Proton acceptor" evidence="1">
    <location>
        <position position="192"/>
    </location>
</feature>
<feature type="binding site" evidence="1">
    <location>
        <position position="11"/>
    </location>
    <ligand>
        <name>NADPH</name>
        <dbReference type="ChEBI" id="CHEBI:57783"/>
    </ligand>
</feature>
<feature type="binding site" evidence="1">
    <location>
        <position position="12"/>
    </location>
    <ligand>
        <name>NADPH</name>
        <dbReference type="ChEBI" id="CHEBI:57783"/>
    </ligand>
</feature>
<feature type="binding site" evidence="1">
    <location>
        <position position="33"/>
    </location>
    <ligand>
        <name>NADPH</name>
        <dbReference type="ChEBI" id="CHEBI:57783"/>
    </ligand>
</feature>
<feature type="binding site" evidence="1">
    <location>
        <position position="106"/>
    </location>
    <ligand>
        <name>NADPH</name>
        <dbReference type="ChEBI" id="CHEBI:57783"/>
    </ligand>
</feature>
<feature type="binding site" evidence="1">
    <location>
        <position position="106"/>
    </location>
    <ligand>
        <name>sn-glycerol 3-phosphate</name>
        <dbReference type="ChEBI" id="CHEBI:57597"/>
    </ligand>
</feature>
<feature type="binding site" evidence="1">
    <location>
        <position position="137"/>
    </location>
    <ligand>
        <name>sn-glycerol 3-phosphate</name>
        <dbReference type="ChEBI" id="CHEBI:57597"/>
    </ligand>
</feature>
<feature type="binding site" evidence="1">
    <location>
        <position position="139"/>
    </location>
    <ligand>
        <name>sn-glycerol 3-phosphate</name>
        <dbReference type="ChEBI" id="CHEBI:57597"/>
    </ligand>
</feature>
<feature type="binding site" evidence="1">
    <location>
        <position position="141"/>
    </location>
    <ligand>
        <name>NADPH</name>
        <dbReference type="ChEBI" id="CHEBI:57783"/>
    </ligand>
</feature>
<feature type="binding site" evidence="1">
    <location>
        <position position="192"/>
    </location>
    <ligand>
        <name>sn-glycerol 3-phosphate</name>
        <dbReference type="ChEBI" id="CHEBI:57597"/>
    </ligand>
</feature>
<feature type="binding site" evidence="1">
    <location>
        <position position="245"/>
    </location>
    <ligand>
        <name>sn-glycerol 3-phosphate</name>
        <dbReference type="ChEBI" id="CHEBI:57597"/>
    </ligand>
</feature>
<feature type="binding site" evidence="1">
    <location>
        <position position="255"/>
    </location>
    <ligand>
        <name>sn-glycerol 3-phosphate</name>
        <dbReference type="ChEBI" id="CHEBI:57597"/>
    </ligand>
</feature>
<feature type="binding site" evidence="1">
    <location>
        <position position="256"/>
    </location>
    <ligand>
        <name>NADPH</name>
        <dbReference type="ChEBI" id="CHEBI:57783"/>
    </ligand>
</feature>
<feature type="binding site" evidence="1">
    <location>
        <position position="256"/>
    </location>
    <ligand>
        <name>sn-glycerol 3-phosphate</name>
        <dbReference type="ChEBI" id="CHEBI:57597"/>
    </ligand>
</feature>
<feature type="binding site" evidence="1">
    <location>
        <position position="257"/>
    </location>
    <ligand>
        <name>sn-glycerol 3-phosphate</name>
        <dbReference type="ChEBI" id="CHEBI:57597"/>
    </ligand>
</feature>
<feature type="binding site" evidence="1">
    <location>
        <position position="280"/>
    </location>
    <ligand>
        <name>NADPH</name>
        <dbReference type="ChEBI" id="CHEBI:57783"/>
    </ligand>
</feature>
<feature type="binding site" evidence="1">
    <location>
        <position position="282"/>
    </location>
    <ligand>
        <name>NADPH</name>
        <dbReference type="ChEBI" id="CHEBI:57783"/>
    </ligand>
</feature>
<keyword id="KW-0963">Cytoplasm</keyword>
<keyword id="KW-0444">Lipid biosynthesis</keyword>
<keyword id="KW-0443">Lipid metabolism</keyword>
<keyword id="KW-0520">NAD</keyword>
<keyword id="KW-0521">NADP</keyword>
<keyword id="KW-0547">Nucleotide-binding</keyword>
<keyword id="KW-0560">Oxidoreductase</keyword>
<keyword id="KW-0594">Phospholipid biosynthesis</keyword>
<keyword id="KW-1208">Phospholipid metabolism</keyword>
<keyword id="KW-1185">Reference proteome</keyword>
<organism>
    <name type="scientific">Bacillus cereus (strain ATCC 14579 / DSM 31 / CCUG 7414 / JCM 2152 / NBRC 15305 / NCIMB 9373 / NCTC 2599 / NRRL B-3711)</name>
    <dbReference type="NCBI Taxonomy" id="226900"/>
    <lineage>
        <taxon>Bacteria</taxon>
        <taxon>Bacillati</taxon>
        <taxon>Bacillota</taxon>
        <taxon>Bacilli</taxon>
        <taxon>Bacillales</taxon>
        <taxon>Bacillaceae</taxon>
        <taxon>Bacillus</taxon>
        <taxon>Bacillus cereus group</taxon>
    </lineage>
</organism>
<protein>
    <recommendedName>
        <fullName evidence="1">Glycerol-3-phosphate dehydrogenase [NAD(P)+]</fullName>
        <ecNumber evidence="1">1.1.1.94</ecNumber>
    </recommendedName>
    <alternativeName>
        <fullName evidence="1">NAD(P)(+)-dependent glycerol-3-phosphate dehydrogenase</fullName>
    </alternativeName>
    <alternativeName>
        <fullName evidence="1">NAD(P)H-dependent dihydroxyacetone-phosphate reductase</fullName>
    </alternativeName>
</protein>
<accession>Q81FR4</accession>
<sequence>MTKITVVGAGSWGTALAMVLADNGHDVRIWGNRPELMDEINTKHENSRYLPGITLPSTIVAYSSLEEALVDVNTVLLVVPTKAYRDVLQEMKEIVTEPITWIHASKGIEPGTSKRISEVIEEEIPEHLIKDVVVLSGPSHAEEVGLRQATTVTSAAKRMEAAEEVQDLFMNSYFRVYTNPDIVGVELGGALKNIIALAAGITDGLGLGDNAKAALMTRGLTEIARLGRKMGGNPLTFAGLTGMGDLIVTCTSVHSRNWRAGNMLGKGHSLEEVLESMGMVVEGVRTTKAAHELAEKMEVEMPITAALYDVLFNGNNVKDAVGSLMGRVRKHEVEAIPDLL</sequence>
<dbReference type="EC" id="1.1.1.94" evidence="1"/>
<dbReference type="EMBL" id="AE016877">
    <property type="protein sequence ID" value="AAP08485.1"/>
    <property type="molecule type" value="Genomic_DNA"/>
</dbReference>
<dbReference type="RefSeq" id="NP_831284.1">
    <property type="nucleotide sequence ID" value="NC_004722.1"/>
</dbReference>
<dbReference type="RefSeq" id="WP_000161763.1">
    <property type="nucleotide sequence ID" value="NZ_CP138336.1"/>
</dbReference>
<dbReference type="SMR" id="Q81FR4"/>
<dbReference type="STRING" id="226900.BC_1505"/>
<dbReference type="KEGG" id="bce:BC1505"/>
<dbReference type="PATRIC" id="fig|226900.8.peg.1482"/>
<dbReference type="HOGENOM" id="CLU_033449_0_2_9"/>
<dbReference type="OrthoDB" id="9812273at2"/>
<dbReference type="UniPathway" id="UPA00940"/>
<dbReference type="Proteomes" id="UP000001417">
    <property type="component" value="Chromosome"/>
</dbReference>
<dbReference type="GO" id="GO:0005829">
    <property type="term" value="C:cytosol"/>
    <property type="evidence" value="ECO:0000318"/>
    <property type="project" value="GO_Central"/>
</dbReference>
<dbReference type="GO" id="GO:0047952">
    <property type="term" value="F:glycerol-3-phosphate dehydrogenase [NAD(P)+] activity"/>
    <property type="evidence" value="ECO:0000318"/>
    <property type="project" value="GO_Central"/>
</dbReference>
<dbReference type="GO" id="GO:0051287">
    <property type="term" value="F:NAD binding"/>
    <property type="evidence" value="ECO:0007669"/>
    <property type="project" value="InterPro"/>
</dbReference>
<dbReference type="GO" id="GO:0005975">
    <property type="term" value="P:carbohydrate metabolic process"/>
    <property type="evidence" value="ECO:0007669"/>
    <property type="project" value="InterPro"/>
</dbReference>
<dbReference type="GO" id="GO:0046167">
    <property type="term" value="P:glycerol-3-phosphate biosynthetic process"/>
    <property type="evidence" value="ECO:0007669"/>
    <property type="project" value="UniProtKB-UniRule"/>
</dbReference>
<dbReference type="GO" id="GO:0046168">
    <property type="term" value="P:glycerol-3-phosphate catabolic process"/>
    <property type="evidence" value="ECO:0007669"/>
    <property type="project" value="InterPro"/>
</dbReference>
<dbReference type="GO" id="GO:0006072">
    <property type="term" value="P:glycerol-3-phosphate metabolic process"/>
    <property type="evidence" value="ECO:0000318"/>
    <property type="project" value="GO_Central"/>
</dbReference>
<dbReference type="GO" id="GO:0006650">
    <property type="term" value="P:glycerophospholipid metabolic process"/>
    <property type="evidence" value="ECO:0007669"/>
    <property type="project" value="UniProtKB-UniRule"/>
</dbReference>
<dbReference type="GO" id="GO:0008654">
    <property type="term" value="P:phospholipid biosynthetic process"/>
    <property type="evidence" value="ECO:0007669"/>
    <property type="project" value="UniProtKB-KW"/>
</dbReference>
<dbReference type="FunFam" id="1.10.1040.10:FF:000001">
    <property type="entry name" value="Glycerol-3-phosphate dehydrogenase [NAD(P)+]"/>
    <property type="match status" value="1"/>
</dbReference>
<dbReference type="FunFam" id="3.40.50.720:FF:000019">
    <property type="entry name" value="Glycerol-3-phosphate dehydrogenase [NAD(P)+]"/>
    <property type="match status" value="1"/>
</dbReference>
<dbReference type="Gene3D" id="1.10.1040.10">
    <property type="entry name" value="N-(1-d-carboxylethyl)-l-norvaline Dehydrogenase, domain 2"/>
    <property type="match status" value="1"/>
</dbReference>
<dbReference type="Gene3D" id="3.40.50.720">
    <property type="entry name" value="NAD(P)-binding Rossmann-like Domain"/>
    <property type="match status" value="1"/>
</dbReference>
<dbReference type="HAMAP" id="MF_00394">
    <property type="entry name" value="NAD_Glyc3P_dehydrog"/>
    <property type="match status" value="1"/>
</dbReference>
<dbReference type="InterPro" id="IPR008927">
    <property type="entry name" value="6-PGluconate_DH-like_C_sf"/>
</dbReference>
<dbReference type="InterPro" id="IPR013328">
    <property type="entry name" value="6PGD_dom2"/>
</dbReference>
<dbReference type="InterPro" id="IPR006168">
    <property type="entry name" value="G3P_DH_NAD-dep"/>
</dbReference>
<dbReference type="InterPro" id="IPR006109">
    <property type="entry name" value="G3P_DH_NAD-dep_C"/>
</dbReference>
<dbReference type="InterPro" id="IPR011128">
    <property type="entry name" value="G3P_DH_NAD-dep_N"/>
</dbReference>
<dbReference type="InterPro" id="IPR036291">
    <property type="entry name" value="NAD(P)-bd_dom_sf"/>
</dbReference>
<dbReference type="NCBIfam" id="NF000940">
    <property type="entry name" value="PRK00094.1-2"/>
    <property type="match status" value="1"/>
</dbReference>
<dbReference type="NCBIfam" id="NF000941">
    <property type="entry name" value="PRK00094.1-3"/>
    <property type="match status" value="1"/>
</dbReference>
<dbReference type="NCBIfam" id="NF000942">
    <property type="entry name" value="PRK00094.1-4"/>
    <property type="match status" value="1"/>
</dbReference>
<dbReference type="PANTHER" id="PTHR11728">
    <property type="entry name" value="GLYCEROL-3-PHOSPHATE DEHYDROGENASE"/>
    <property type="match status" value="1"/>
</dbReference>
<dbReference type="PANTHER" id="PTHR11728:SF1">
    <property type="entry name" value="GLYCEROL-3-PHOSPHATE DEHYDROGENASE [NAD(+)] 2, CHLOROPLASTIC"/>
    <property type="match status" value="1"/>
</dbReference>
<dbReference type="Pfam" id="PF07479">
    <property type="entry name" value="NAD_Gly3P_dh_C"/>
    <property type="match status" value="1"/>
</dbReference>
<dbReference type="Pfam" id="PF01210">
    <property type="entry name" value="NAD_Gly3P_dh_N"/>
    <property type="match status" value="1"/>
</dbReference>
<dbReference type="PIRSF" id="PIRSF000114">
    <property type="entry name" value="Glycerol-3-P_dh"/>
    <property type="match status" value="1"/>
</dbReference>
<dbReference type="PRINTS" id="PR00077">
    <property type="entry name" value="GPDHDRGNASE"/>
</dbReference>
<dbReference type="SUPFAM" id="SSF48179">
    <property type="entry name" value="6-phosphogluconate dehydrogenase C-terminal domain-like"/>
    <property type="match status" value="1"/>
</dbReference>
<dbReference type="SUPFAM" id="SSF51735">
    <property type="entry name" value="NAD(P)-binding Rossmann-fold domains"/>
    <property type="match status" value="1"/>
</dbReference>
<dbReference type="PROSITE" id="PS00957">
    <property type="entry name" value="NAD_G3PDH"/>
    <property type="match status" value="1"/>
</dbReference>